<accession>Q324R2</accession>
<reference key="1">
    <citation type="journal article" date="2005" name="Nucleic Acids Res.">
        <title>Genome dynamics and diversity of Shigella species, the etiologic agents of bacillary dysentery.</title>
        <authorList>
            <person name="Yang F."/>
            <person name="Yang J."/>
            <person name="Zhang X."/>
            <person name="Chen L."/>
            <person name="Jiang Y."/>
            <person name="Yan Y."/>
            <person name="Tang X."/>
            <person name="Wang J."/>
            <person name="Xiong Z."/>
            <person name="Dong J."/>
            <person name="Xue Y."/>
            <person name="Zhu Y."/>
            <person name="Xu X."/>
            <person name="Sun L."/>
            <person name="Chen S."/>
            <person name="Nie H."/>
            <person name="Peng J."/>
            <person name="Xu J."/>
            <person name="Wang Y."/>
            <person name="Yuan Z."/>
            <person name="Wen Y."/>
            <person name="Yao Z."/>
            <person name="Shen Y."/>
            <person name="Qiang B."/>
            <person name="Hou Y."/>
            <person name="Yu J."/>
            <person name="Jin Q."/>
        </authorList>
    </citation>
    <scope>NUCLEOTIDE SEQUENCE [LARGE SCALE GENOMIC DNA]</scope>
    <source>
        <strain>Sb227</strain>
    </source>
</reference>
<evidence type="ECO:0000255" key="1">
    <source>
        <dbReference type="HAMAP-Rule" id="MF_00659"/>
    </source>
</evidence>
<gene>
    <name evidence="1" type="primary">ybeD</name>
    <name type="ordered locus">SBO_0495</name>
</gene>
<protein>
    <recommendedName>
        <fullName evidence="1">UPF0250 protein YbeD</fullName>
    </recommendedName>
</protein>
<sequence length="87" mass="9827">MKTKLNELLEFPTPFTYKVMGQALPELVDQVVEVVQRHAPGDYTPTVKPSSKGNYHSVSITINATHIEQVETLYEELGKIDIVRMVL</sequence>
<organism>
    <name type="scientific">Shigella boydii serotype 4 (strain Sb227)</name>
    <dbReference type="NCBI Taxonomy" id="300268"/>
    <lineage>
        <taxon>Bacteria</taxon>
        <taxon>Pseudomonadati</taxon>
        <taxon>Pseudomonadota</taxon>
        <taxon>Gammaproteobacteria</taxon>
        <taxon>Enterobacterales</taxon>
        <taxon>Enterobacteriaceae</taxon>
        <taxon>Shigella</taxon>
    </lineage>
</organism>
<comment type="similarity">
    <text evidence="1">Belongs to the UPF0250 family.</text>
</comment>
<feature type="chain" id="PRO_1000061899" description="UPF0250 protein YbeD">
    <location>
        <begin position="1"/>
        <end position="87"/>
    </location>
</feature>
<dbReference type="EMBL" id="CP000036">
    <property type="protein sequence ID" value="ABB65196.1"/>
    <property type="molecule type" value="Genomic_DNA"/>
</dbReference>
<dbReference type="RefSeq" id="WP_000850550.1">
    <property type="nucleotide sequence ID" value="NC_007613.1"/>
</dbReference>
<dbReference type="SMR" id="Q324R2"/>
<dbReference type="GeneID" id="93776851"/>
<dbReference type="KEGG" id="sbo:SBO_0495"/>
<dbReference type="HOGENOM" id="CLU_161438_2_1_6"/>
<dbReference type="Proteomes" id="UP000007067">
    <property type="component" value="Chromosome"/>
</dbReference>
<dbReference type="GO" id="GO:0005829">
    <property type="term" value="C:cytosol"/>
    <property type="evidence" value="ECO:0007669"/>
    <property type="project" value="TreeGrafter"/>
</dbReference>
<dbReference type="FunFam" id="3.30.70.260:FF:000002">
    <property type="entry name" value="UPF0250 protein YbeD"/>
    <property type="match status" value="1"/>
</dbReference>
<dbReference type="Gene3D" id="3.30.70.260">
    <property type="match status" value="1"/>
</dbReference>
<dbReference type="HAMAP" id="MF_00659">
    <property type="entry name" value="UPF0250"/>
    <property type="match status" value="1"/>
</dbReference>
<dbReference type="InterPro" id="IPR007454">
    <property type="entry name" value="UPF0250_YbeD-like"/>
</dbReference>
<dbReference type="InterPro" id="IPR027471">
    <property type="entry name" value="YbeD-like_sf"/>
</dbReference>
<dbReference type="NCBIfam" id="NF003447">
    <property type="entry name" value="PRK04998.1"/>
    <property type="match status" value="1"/>
</dbReference>
<dbReference type="PANTHER" id="PTHR38036">
    <property type="entry name" value="UPF0250 PROTEIN YBED"/>
    <property type="match status" value="1"/>
</dbReference>
<dbReference type="PANTHER" id="PTHR38036:SF1">
    <property type="entry name" value="UPF0250 PROTEIN YBED"/>
    <property type="match status" value="1"/>
</dbReference>
<dbReference type="Pfam" id="PF04359">
    <property type="entry name" value="DUF493"/>
    <property type="match status" value="1"/>
</dbReference>
<dbReference type="SUPFAM" id="SSF117991">
    <property type="entry name" value="YbeD/HP0495-like"/>
    <property type="match status" value="1"/>
</dbReference>
<proteinExistence type="inferred from homology"/>
<name>YBED_SHIBS</name>